<name>KADA_METM5</name>
<organism>
    <name type="scientific">Methanococcus maripaludis (strain C5 / ATCC BAA-1333)</name>
    <dbReference type="NCBI Taxonomy" id="402880"/>
    <lineage>
        <taxon>Archaea</taxon>
        <taxon>Methanobacteriati</taxon>
        <taxon>Methanobacteriota</taxon>
        <taxon>Methanomada group</taxon>
        <taxon>Methanococci</taxon>
        <taxon>Methanococcales</taxon>
        <taxon>Methanococcaceae</taxon>
        <taxon>Methanococcus</taxon>
    </lineage>
</organism>
<feature type="chain" id="PRO_1000021700" description="Adenylate kinase">
    <location>
        <begin position="1"/>
        <end position="192"/>
    </location>
</feature>
<feature type="binding site" evidence="1">
    <location>
        <begin position="10"/>
        <end position="18"/>
    </location>
    <ligand>
        <name>ATP</name>
        <dbReference type="ChEBI" id="CHEBI:30616"/>
    </ligand>
</feature>
<evidence type="ECO:0000255" key="1">
    <source>
        <dbReference type="HAMAP-Rule" id="MF_00234"/>
    </source>
</evidence>
<comment type="catalytic activity">
    <reaction evidence="1">
        <text>AMP + ATP = 2 ADP</text>
        <dbReference type="Rhea" id="RHEA:12973"/>
        <dbReference type="ChEBI" id="CHEBI:30616"/>
        <dbReference type="ChEBI" id="CHEBI:456215"/>
        <dbReference type="ChEBI" id="CHEBI:456216"/>
        <dbReference type="EC" id="2.7.4.3"/>
    </reaction>
</comment>
<comment type="subunit">
    <text evidence="1">Monomer.</text>
</comment>
<comment type="subcellular location">
    <subcellularLocation>
        <location evidence="1">Cytoplasm</location>
    </subcellularLocation>
</comment>
<comment type="similarity">
    <text evidence="1">Belongs to the archaeal adenylate kinase family.</text>
</comment>
<dbReference type="EC" id="2.7.4.3" evidence="1"/>
<dbReference type="EMBL" id="CP000609">
    <property type="protein sequence ID" value="ABO34876.1"/>
    <property type="molecule type" value="Genomic_DNA"/>
</dbReference>
<dbReference type="RefSeq" id="WP_011868330.1">
    <property type="nucleotide sequence ID" value="NC_009135.1"/>
</dbReference>
<dbReference type="SMR" id="A4FXE7"/>
<dbReference type="STRING" id="402880.MmarC5_0562"/>
<dbReference type="GeneID" id="4928411"/>
<dbReference type="KEGG" id="mmq:MmarC5_0562"/>
<dbReference type="eggNOG" id="arCOG01039">
    <property type="taxonomic scope" value="Archaea"/>
</dbReference>
<dbReference type="HOGENOM" id="CLU_119371_0_0_2"/>
<dbReference type="OrthoDB" id="26198at2157"/>
<dbReference type="Proteomes" id="UP000000253">
    <property type="component" value="Chromosome"/>
</dbReference>
<dbReference type="GO" id="GO:0005737">
    <property type="term" value="C:cytoplasm"/>
    <property type="evidence" value="ECO:0007669"/>
    <property type="project" value="UniProtKB-SubCell"/>
</dbReference>
<dbReference type="GO" id="GO:0004017">
    <property type="term" value="F:adenylate kinase activity"/>
    <property type="evidence" value="ECO:0007669"/>
    <property type="project" value="UniProtKB-UniRule"/>
</dbReference>
<dbReference type="GO" id="GO:0005524">
    <property type="term" value="F:ATP binding"/>
    <property type="evidence" value="ECO:0007669"/>
    <property type="project" value="UniProtKB-UniRule"/>
</dbReference>
<dbReference type="Gene3D" id="3.40.50.300">
    <property type="entry name" value="P-loop containing nucleotide triphosphate hydrolases"/>
    <property type="match status" value="1"/>
</dbReference>
<dbReference type="HAMAP" id="MF_00234">
    <property type="entry name" value="Adenylate_kinase_AdkA"/>
    <property type="match status" value="1"/>
</dbReference>
<dbReference type="InterPro" id="IPR023477">
    <property type="entry name" value="Adenylate_kinase_AdkA"/>
</dbReference>
<dbReference type="InterPro" id="IPR027417">
    <property type="entry name" value="P-loop_NTPase"/>
</dbReference>
<dbReference type="NCBIfam" id="NF003122">
    <property type="entry name" value="PRK04040.1"/>
    <property type="match status" value="1"/>
</dbReference>
<dbReference type="Pfam" id="PF13207">
    <property type="entry name" value="AAA_17"/>
    <property type="match status" value="1"/>
</dbReference>
<dbReference type="SUPFAM" id="SSF52540">
    <property type="entry name" value="P-loop containing nucleoside triphosphate hydrolases"/>
    <property type="match status" value="1"/>
</dbReference>
<sequence>MKNKVVVVTGVPGVGGTTVTQKAMDILSEEGLTYKMVNFGSAMFDVANEEGIASDRDQMRKLDPETQKRIQKMAGRKIAEMAKESPVAVDTHSTVKTPKGYLPGLPAWVLTELNPDIVIVVETDGDEILMRRLSDESRKRDLETTASIEEHQFMNRAAAMSYGVLTGATVKIVKNKNGLVDNAVEELISVLR</sequence>
<accession>A4FXE7</accession>
<reference key="1">
    <citation type="submission" date="2007-03" db="EMBL/GenBank/DDBJ databases">
        <title>Complete sequence of chromosome of Methanococcus maripaludis C5.</title>
        <authorList>
            <consortium name="US DOE Joint Genome Institute"/>
            <person name="Copeland A."/>
            <person name="Lucas S."/>
            <person name="Lapidus A."/>
            <person name="Barry K."/>
            <person name="Glavina del Rio T."/>
            <person name="Dalin E."/>
            <person name="Tice H."/>
            <person name="Pitluck S."/>
            <person name="Chertkov O."/>
            <person name="Brettin T."/>
            <person name="Bruce D."/>
            <person name="Han C."/>
            <person name="Detter J.C."/>
            <person name="Schmutz J."/>
            <person name="Larimer F."/>
            <person name="Land M."/>
            <person name="Hauser L."/>
            <person name="Kyrpides N."/>
            <person name="Mikhailova N."/>
            <person name="Sieprawska-Lupa M."/>
            <person name="Whitman W.B."/>
            <person name="Richardson P."/>
        </authorList>
    </citation>
    <scope>NUCLEOTIDE SEQUENCE [LARGE SCALE GENOMIC DNA]</scope>
    <source>
        <strain>C5 / ATCC BAA-1333</strain>
    </source>
</reference>
<protein>
    <recommendedName>
        <fullName evidence="1">Adenylate kinase</fullName>
        <shortName evidence="1">AK</shortName>
        <ecNumber evidence="1">2.7.4.3</ecNumber>
    </recommendedName>
    <alternativeName>
        <fullName evidence="1">ATP-AMP transphosphorylase</fullName>
    </alternativeName>
</protein>
<gene>
    <name evidence="1" type="primary">adkA</name>
    <name type="ordered locus">MmarC5_0562</name>
</gene>
<proteinExistence type="inferred from homology"/>
<keyword id="KW-0067">ATP-binding</keyword>
<keyword id="KW-0963">Cytoplasm</keyword>
<keyword id="KW-0418">Kinase</keyword>
<keyword id="KW-0547">Nucleotide-binding</keyword>
<keyword id="KW-0808">Transferase</keyword>